<accession>Q89GV3</accession>
<dbReference type="EC" id="4.3.1.3" evidence="1"/>
<dbReference type="EMBL" id="BA000040">
    <property type="protein sequence ID" value="BAC51507.1"/>
    <property type="molecule type" value="Genomic_DNA"/>
</dbReference>
<dbReference type="RefSeq" id="NP_772882.1">
    <property type="nucleotide sequence ID" value="NC_004463.1"/>
</dbReference>
<dbReference type="RefSeq" id="WP_011088982.1">
    <property type="nucleotide sequence ID" value="NC_004463.1"/>
</dbReference>
<dbReference type="SMR" id="Q89GV3"/>
<dbReference type="STRING" id="224911.AAV28_28765"/>
<dbReference type="EnsemblBacteria" id="BAC51507">
    <property type="protein sequence ID" value="BAC51507"/>
    <property type="gene ID" value="BAC51507"/>
</dbReference>
<dbReference type="GeneID" id="46493230"/>
<dbReference type="KEGG" id="bja:bll6242"/>
<dbReference type="PATRIC" id="fig|224911.44.peg.6215"/>
<dbReference type="eggNOG" id="COG2986">
    <property type="taxonomic scope" value="Bacteria"/>
</dbReference>
<dbReference type="HOGENOM" id="CLU_014801_4_0_5"/>
<dbReference type="InParanoid" id="Q89GV3"/>
<dbReference type="OrthoDB" id="9806955at2"/>
<dbReference type="PhylomeDB" id="Q89GV3"/>
<dbReference type="UniPathway" id="UPA00379">
    <property type="reaction ID" value="UER00549"/>
</dbReference>
<dbReference type="Proteomes" id="UP000002526">
    <property type="component" value="Chromosome"/>
</dbReference>
<dbReference type="GO" id="GO:0005737">
    <property type="term" value="C:cytoplasm"/>
    <property type="evidence" value="ECO:0007669"/>
    <property type="project" value="UniProtKB-SubCell"/>
</dbReference>
<dbReference type="GO" id="GO:0004397">
    <property type="term" value="F:histidine ammonia-lyase activity"/>
    <property type="evidence" value="ECO:0000318"/>
    <property type="project" value="GO_Central"/>
</dbReference>
<dbReference type="GO" id="GO:0006548">
    <property type="term" value="P:L-histidine catabolic process"/>
    <property type="evidence" value="ECO:0000318"/>
    <property type="project" value="GO_Central"/>
</dbReference>
<dbReference type="GO" id="GO:0019556">
    <property type="term" value="P:L-histidine catabolic process to glutamate and formamide"/>
    <property type="evidence" value="ECO:0007669"/>
    <property type="project" value="UniProtKB-UniPathway"/>
</dbReference>
<dbReference type="GO" id="GO:0019557">
    <property type="term" value="P:L-histidine catabolic process to glutamate and formate"/>
    <property type="evidence" value="ECO:0007669"/>
    <property type="project" value="UniProtKB-UniPathway"/>
</dbReference>
<dbReference type="CDD" id="cd00332">
    <property type="entry name" value="PAL-HAL"/>
    <property type="match status" value="1"/>
</dbReference>
<dbReference type="FunFam" id="1.10.275.10:FF:000005">
    <property type="entry name" value="Histidine ammonia-lyase"/>
    <property type="match status" value="1"/>
</dbReference>
<dbReference type="FunFam" id="1.20.200.10:FF:000003">
    <property type="entry name" value="Histidine ammonia-lyase"/>
    <property type="match status" value="1"/>
</dbReference>
<dbReference type="Gene3D" id="1.20.200.10">
    <property type="entry name" value="Fumarase/aspartase (Central domain)"/>
    <property type="match status" value="1"/>
</dbReference>
<dbReference type="Gene3D" id="1.10.275.10">
    <property type="entry name" value="Fumarase/aspartase (N-terminal domain)"/>
    <property type="match status" value="1"/>
</dbReference>
<dbReference type="HAMAP" id="MF_00229">
    <property type="entry name" value="His_ammonia_lyase"/>
    <property type="match status" value="1"/>
</dbReference>
<dbReference type="InterPro" id="IPR001106">
    <property type="entry name" value="Aromatic_Lyase"/>
</dbReference>
<dbReference type="InterPro" id="IPR024083">
    <property type="entry name" value="Fumarase/histidase_N"/>
</dbReference>
<dbReference type="InterPro" id="IPR005921">
    <property type="entry name" value="HutH"/>
</dbReference>
<dbReference type="InterPro" id="IPR008948">
    <property type="entry name" value="L-Aspartase-like"/>
</dbReference>
<dbReference type="InterPro" id="IPR022313">
    <property type="entry name" value="Phe/His_NH3-lyase_AS"/>
</dbReference>
<dbReference type="NCBIfam" id="TIGR01225">
    <property type="entry name" value="hutH"/>
    <property type="match status" value="1"/>
</dbReference>
<dbReference type="NCBIfam" id="NF006871">
    <property type="entry name" value="PRK09367.1"/>
    <property type="match status" value="1"/>
</dbReference>
<dbReference type="PANTHER" id="PTHR10362">
    <property type="entry name" value="HISTIDINE AMMONIA-LYASE"/>
    <property type="match status" value="1"/>
</dbReference>
<dbReference type="Pfam" id="PF00221">
    <property type="entry name" value="Lyase_aromatic"/>
    <property type="match status" value="1"/>
</dbReference>
<dbReference type="SUPFAM" id="SSF48557">
    <property type="entry name" value="L-aspartase-like"/>
    <property type="match status" value="1"/>
</dbReference>
<dbReference type="PROSITE" id="PS00488">
    <property type="entry name" value="PAL_HISTIDASE"/>
    <property type="match status" value="1"/>
</dbReference>
<name>HUTH_BRADU</name>
<evidence type="ECO:0000255" key="1">
    <source>
        <dbReference type="HAMAP-Rule" id="MF_00229"/>
    </source>
</evidence>
<comment type="catalytic activity">
    <reaction evidence="1">
        <text>L-histidine = trans-urocanate + NH4(+)</text>
        <dbReference type="Rhea" id="RHEA:21232"/>
        <dbReference type="ChEBI" id="CHEBI:17771"/>
        <dbReference type="ChEBI" id="CHEBI:28938"/>
        <dbReference type="ChEBI" id="CHEBI:57595"/>
        <dbReference type="EC" id="4.3.1.3"/>
    </reaction>
</comment>
<comment type="pathway">
    <text evidence="1">Amino-acid degradation; L-histidine degradation into L-glutamate; N-formimidoyl-L-glutamate from L-histidine: step 1/3.</text>
</comment>
<comment type="subcellular location">
    <subcellularLocation>
        <location evidence="1">Cytoplasm</location>
    </subcellularLocation>
</comment>
<comment type="PTM">
    <text evidence="1">Contains an active site 4-methylidene-imidazol-5-one (MIO), which is formed autocatalytically by cyclization and dehydration of residues Ala-Ser-Gly.</text>
</comment>
<comment type="similarity">
    <text evidence="1">Belongs to the PAL/histidase family.</text>
</comment>
<keyword id="KW-0963">Cytoplasm</keyword>
<keyword id="KW-0369">Histidine metabolism</keyword>
<keyword id="KW-0456">Lyase</keyword>
<keyword id="KW-1185">Reference proteome</keyword>
<reference key="1">
    <citation type="journal article" date="2002" name="DNA Res.">
        <title>Complete genomic sequence of nitrogen-fixing symbiotic bacterium Bradyrhizobium japonicum USDA110.</title>
        <authorList>
            <person name="Kaneko T."/>
            <person name="Nakamura Y."/>
            <person name="Sato S."/>
            <person name="Minamisawa K."/>
            <person name="Uchiumi T."/>
            <person name="Sasamoto S."/>
            <person name="Watanabe A."/>
            <person name="Idesawa K."/>
            <person name="Iriguchi M."/>
            <person name="Kawashima K."/>
            <person name="Kohara M."/>
            <person name="Matsumoto M."/>
            <person name="Shimpo S."/>
            <person name="Tsuruoka H."/>
            <person name="Wada T."/>
            <person name="Yamada M."/>
            <person name="Tabata S."/>
        </authorList>
    </citation>
    <scope>NUCLEOTIDE SEQUENCE [LARGE SCALE GENOMIC DNA]</scope>
    <source>
        <strain>JCM 10833 / BCRC 13528 / IAM 13628 / NBRC 14792 / USDA 110</strain>
    </source>
</reference>
<proteinExistence type="inferred from homology"/>
<sequence>MTEQDAAIVVKPGTVSLDDLARVLAGQPVVLDPSFWPRVEAAAAIVAKAAQADTPVYGINTGFGKLASKRIPPDQTALLQRNLIVSHCCGVGPATPEPIVRLMMALKIISLGRGASGVRREVIEQLQGMLARRVCPLVPQQGSVGASGDLAPLAHMTAVMIGEGQAIVDGKTVSGGEALAAAGLAPLTLGPKEGLALINGTQFSTAYAISGVLRGFHLARAALVTGALSVDAAMASTAPFRPEIQALRGHAGQIAAAATLTALLDGSDIRLSHLEGDERVQDPYCLRCQPQVAGAALDLITQTARALIVEANAVTDNPLVLVETGEIVSGGNFHAEPVAFAADTIALALSEIGAISERRIATLVDPALNFGLPPFLTPDPGVNSGFMIAEVTAAALYAENKQRAAACSIDSTPTSANQEDHVSMAAHAARRLADMADNLAAILGIELLVAAQGITLRAPHATSAPLVAVIAALREQVPALGADRYMAGDLAKAAALVEADALPAAAIGVLPSDPFPRLA</sequence>
<organism>
    <name type="scientific">Bradyrhizobium diazoefficiens (strain JCM 10833 / BCRC 13528 / IAM 13628 / NBRC 14792 / USDA 110)</name>
    <dbReference type="NCBI Taxonomy" id="224911"/>
    <lineage>
        <taxon>Bacteria</taxon>
        <taxon>Pseudomonadati</taxon>
        <taxon>Pseudomonadota</taxon>
        <taxon>Alphaproteobacteria</taxon>
        <taxon>Hyphomicrobiales</taxon>
        <taxon>Nitrobacteraceae</taxon>
        <taxon>Bradyrhizobium</taxon>
    </lineage>
</organism>
<feature type="chain" id="PRO_0000160994" description="Histidine ammonia-lyase">
    <location>
        <begin position="1"/>
        <end position="519"/>
    </location>
</feature>
<feature type="modified residue" description="2,3-didehydroalanine (Ser)" evidence="1">
    <location>
        <position position="147"/>
    </location>
</feature>
<feature type="cross-link" description="5-imidazolinone (Ala-Gly)" evidence="1">
    <location>
        <begin position="146"/>
        <end position="148"/>
    </location>
</feature>
<gene>
    <name evidence="1" type="primary">hutH</name>
    <name type="ordered locus">bll6242</name>
</gene>
<protein>
    <recommendedName>
        <fullName evidence="1">Histidine ammonia-lyase</fullName>
        <shortName evidence="1">Histidase</shortName>
        <ecNumber evidence="1">4.3.1.3</ecNumber>
    </recommendedName>
</protein>